<comment type="function">
    <text evidence="1 5">Contributes to phagocytic removal of apoptotic cells in many tissues. Plays an important role in the maintenance of intestinal epithelial homeostasis and the promotion of mucosal healing. Promotes VEGF-dependent neovascularization (By similarity). Specific ligand for the alpha-v/beta-3 and alpha-v/beta-5 receptors. Also binds to phosphatidylserine-enriched cell surfaces in a receptor-independent manner. Zona pellucida-binding protein which may play a role in gamete interaction.</text>
</comment>
<comment type="subcellular location">
    <subcellularLocation>
        <location evidence="5">Membrane</location>
        <topology evidence="5">Peripheral membrane protein</topology>
    </subcellularLocation>
    <subcellularLocation>
        <location evidence="5">Secreted</location>
    </subcellularLocation>
    <subcellularLocation>
        <location evidence="6">Cytoplasmic vesicle</location>
        <location evidence="6">Secretory vesicle</location>
        <location evidence="6">Acrosome membrane</location>
        <topology evidence="6">Peripheral membrane protein</topology>
    </subcellularLocation>
    <text>Located in the acrosomal region of zona-pellucida bound sperm.</text>
</comment>
<comment type="tissue specificity">
    <text evidence="5">Mammary epithelial cell surfaces and spermatozoan. Also present in testis, epididymis, uterus, adrenal gland, tonsil, muscle, heart, lymphatic gland, thymus and kidney but not spleen, liver, lung or brain.</text>
</comment>
<comment type="domain">
    <text evidence="1">The F5/8 type C 2 domain mediates high-affinity binding to phosphatidylserine-containing membranes.</text>
</comment>
<gene>
    <name type="primary">MFGE8</name>
</gene>
<protein>
    <recommendedName>
        <fullName>Lactadherin</fullName>
    </recommendedName>
    <alternativeName>
        <fullName>MFGM</fullName>
    </alternativeName>
    <alternativeName>
        <fullName>Milk fat globule-EGF factor 8</fullName>
        <shortName>MFG-E8</shortName>
    </alternativeName>
    <alternativeName>
        <fullName>SED1</fullName>
    </alternativeName>
    <alternativeName>
        <fullName>Sperm surface protein SP47</fullName>
        <shortName>PP47</shortName>
    </alternativeName>
</protein>
<organism>
    <name type="scientific">Sus scrofa</name>
    <name type="common">Pig</name>
    <dbReference type="NCBI Taxonomy" id="9823"/>
    <lineage>
        <taxon>Eukaryota</taxon>
        <taxon>Metazoa</taxon>
        <taxon>Chordata</taxon>
        <taxon>Craniata</taxon>
        <taxon>Vertebrata</taxon>
        <taxon>Euteleostomi</taxon>
        <taxon>Mammalia</taxon>
        <taxon>Eutheria</taxon>
        <taxon>Laurasiatheria</taxon>
        <taxon>Artiodactyla</taxon>
        <taxon>Suina</taxon>
        <taxon>Suidae</taxon>
        <taxon>Sus</taxon>
    </lineage>
</organism>
<feature type="chain" id="PRO_0000055633" description="Lactadherin">
    <location>
        <begin position="1"/>
        <end position="409"/>
    </location>
</feature>
<feature type="domain" description="EGF-like 1" evidence="3">
    <location>
        <begin position="2"/>
        <end position="41"/>
    </location>
</feature>
<feature type="domain" description="EGF-like 2" evidence="3">
    <location>
        <begin position="44"/>
        <end position="88"/>
    </location>
</feature>
<feature type="domain" description="F5/8 type C 1" evidence="4">
    <location>
        <begin position="91"/>
        <end position="247"/>
    </location>
</feature>
<feature type="domain" description="F5/8 type C 2" evidence="4">
    <location>
        <begin position="252"/>
        <end position="409"/>
    </location>
</feature>
<feature type="short sequence motif" description="Cell attachment site">
    <location>
        <begin position="67"/>
        <end position="69"/>
    </location>
</feature>
<feature type="glycosylation site" description="N-linked (GlcNAc...) asparagine" evidence="2">
    <location>
        <position position="41"/>
    </location>
</feature>
<feature type="glycosylation site" description="N-linked (GlcNAc...) asparagine" evidence="2">
    <location>
        <position position="372"/>
    </location>
</feature>
<feature type="disulfide bond" evidence="1">
    <location>
        <begin position="6"/>
        <end position="17"/>
    </location>
</feature>
<feature type="disulfide bond" evidence="1">
    <location>
        <begin position="11"/>
        <end position="29"/>
    </location>
</feature>
<feature type="disulfide bond" evidence="1">
    <location>
        <begin position="31"/>
        <end position="40"/>
    </location>
</feature>
<feature type="disulfide bond" evidence="1">
    <location>
        <begin position="48"/>
        <end position="59"/>
    </location>
</feature>
<feature type="disulfide bond" evidence="1">
    <location>
        <begin position="53"/>
        <end position="76"/>
    </location>
</feature>
<feature type="disulfide bond" evidence="1">
    <location>
        <begin position="78"/>
        <end position="87"/>
    </location>
</feature>
<feature type="disulfide bond" evidence="1">
    <location>
        <begin position="91"/>
        <end position="247"/>
    </location>
</feature>
<feature type="disulfide bond" evidence="1">
    <location>
        <begin position="234"/>
        <end position="238"/>
    </location>
</feature>
<feature type="disulfide bond" evidence="1">
    <location>
        <begin position="252"/>
        <end position="409"/>
    </location>
</feature>
<accession>P79385</accession>
<sequence length="409" mass="45725">FSGDFCDSSLCLNGGTCLLDQDPQKPFHCLCPEGFTGLICNETEKGPCFPNPCHNDAECEVIDDAHRGDVFTEYICKCPHGYTGIHCEIICNAPLGMETGAIADFQISASSMHLGFMGLQRWAPELARLHRAGIVNAWTASNYDRNPWIQVNLLRRMRVTGVVTQGASRAGSAEYMKTFKVAYSTDGRKFQFIQGAEESGDKIFMGNLDNSGLKVNLFEVPLEVQYVRLVPIICHRGCTLRFELLGCELSGCAEPLGLKDNTIPNKQITASSFYRTWGLSAFSWYPFYARLDNQGKFNAWTAQSNSASEWLQIDLGSQRRVTGIITQGARDFGHIQYVAAYKVAYSDDGVSWTEYRDQGALEGKIFPGNLDNNSHKKNMFETPFLTRFVRILPVAWHNRITLRVELLGC</sequence>
<evidence type="ECO:0000250" key="1"/>
<evidence type="ECO:0000255" key="2"/>
<evidence type="ECO:0000255" key="3">
    <source>
        <dbReference type="PROSITE-ProRule" id="PRU00076"/>
    </source>
</evidence>
<evidence type="ECO:0000255" key="4">
    <source>
        <dbReference type="PROSITE-ProRule" id="PRU00081"/>
    </source>
</evidence>
<evidence type="ECO:0000269" key="5">
    <source>
    </source>
</evidence>
<evidence type="ECO:0000305" key="6">
    <source>
    </source>
</evidence>
<proteinExistence type="evidence at protein level"/>
<reference key="1">
    <citation type="journal article" date="1998" name="Biol. Reprod.">
        <title>Molecular cloning and characterization of P47, a novel boar sperm-associated zona pellucida-binding protein homologous to a family of mammalian secretory proteins.</title>
        <authorList>
            <person name="Ensslin M.A."/>
            <person name="Vogel T."/>
            <person name="Calvete J.J."/>
            <person name="Thole H.H."/>
            <person name="Schmidtke J."/>
            <person name="Matsuda T."/>
            <person name="Toepfer-Petersen E."/>
        </authorList>
    </citation>
    <scope>NUCLEOTIDE SEQUENCE [MRNA]</scope>
    <scope>PROTEIN SEQUENCE OF 1-13; 203-214; 267-291; 343-349 AND 378-402</scope>
    <scope>FUNCTION</scope>
    <scope>SUBCELLULAR LOCATION</scope>
    <scope>TISSUE SPECIFICITY</scope>
    <source>
        <tissue>Testis</tissue>
    </source>
</reference>
<dbReference type="EMBL" id="Y11683">
    <property type="protein sequence ID" value="CAA72379.1"/>
    <property type="molecule type" value="mRNA"/>
</dbReference>
<dbReference type="PIR" id="T11743">
    <property type="entry name" value="T11743"/>
</dbReference>
<dbReference type="SMR" id="P79385"/>
<dbReference type="FunCoup" id="P79385">
    <property type="interactions" value="477"/>
</dbReference>
<dbReference type="STRING" id="9823.ENSSSCP00000043923"/>
<dbReference type="GlyCosmos" id="P79385">
    <property type="glycosylation" value="2 sites, No reported glycans"/>
</dbReference>
<dbReference type="GlyGen" id="P79385">
    <property type="glycosylation" value="2 sites"/>
</dbReference>
<dbReference type="PaxDb" id="9823-ENSSSCP00000002007"/>
<dbReference type="PeptideAtlas" id="P79385"/>
<dbReference type="eggNOG" id="ENOG502RXUZ">
    <property type="taxonomic scope" value="Eukaryota"/>
</dbReference>
<dbReference type="InParanoid" id="P79385"/>
<dbReference type="Proteomes" id="UP000008227">
    <property type="component" value="Unplaced"/>
</dbReference>
<dbReference type="Proteomes" id="UP000314985">
    <property type="component" value="Unplaced"/>
</dbReference>
<dbReference type="Proteomes" id="UP000694570">
    <property type="component" value="Unplaced"/>
</dbReference>
<dbReference type="Proteomes" id="UP000694571">
    <property type="component" value="Unplaced"/>
</dbReference>
<dbReference type="Proteomes" id="UP000694720">
    <property type="component" value="Unplaced"/>
</dbReference>
<dbReference type="Proteomes" id="UP000694722">
    <property type="component" value="Unplaced"/>
</dbReference>
<dbReference type="Proteomes" id="UP000694723">
    <property type="component" value="Unplaced"/>
</dbReference>
<dbReference type="Proteomes" id="UP000694724">
    <property type="component" value="Unplaced"/>
</dbReference>
<dbReference type="Proteomes" id="UP000694725">
    <property type="component" value="Unplaced"/>
</dbReference>
<dbReference type="Proteomes" id="UP000694726">
    <property type="component" value="Unplaced"/>
</dbReference>
<dbReference type="Proteomes" id="UP000694727">
    <property type="component" value="Unplaced"/>
</dbReference>
<dbReference type="Proteomes" id="UP000694728">
    <property type="component" value="Unplaced"/>
</dbReference>
<dbReference type="GO" id="GO:0002080">
    <property type="term" value="C:acrosomal membrane"/>
    <property type="evidence" value="ECO:0007669"/>
    <property type="project" value="UniProtKB-SubCell"/>
</dbReference>
<dbReference type="GO" id="GO:0005576">
    <property type="term" value="C:extracellular region"/>
    <property type="evidence" value="ECO:0007669"/>
    <property type="project" value="UniProtKB-SubCell"/>
</dbReference>
<dbReference type="GO" id="GO:0001525">
    <property type="term" value="P:angiogenesis"/>
    <property type="evidence" value="ECO:0007669"/>
    <property type="project" value="UniProtKB-KW"/>
</dbReference>
<dbReference type="GO" id="GO:0007155">
    <property type="term" value="P:cell adhesion"/>
    <property type="evidence" value="ECO:0007669"/>
    <property type="project" value="UniProtKB-KW"/>
</dbReference>
<dbReference type="GO" id="GO:0007338">
    <property type="term" value="P:single fertilization"/>
    <property type="evidence" value="ECO:0007669"/>
    <property type="project" value="UniProtKB-KW"/>
</dbReference>
<dbReference type="CDD" id="cd00054">
    <property type="entry name" value="EGF_CA"/>
    <property type="match status" value="2"/>
</dbReference>
<dbReference type="CDD" id="cd00057">
    <property type="entry name" value="FA58C"/>
    <property type="match status" value="2"/>
</dbReference>
<dbReference type="FunFam" id="2.60.120.260:FF:000002">
    <property type="entry name" value="Coagulation factor VIII"/>
    <property type="match status" value="2"/>
</dbReference>
<dbReference type="Gene3D" id="2.60.120.260">
    <property type="entry name" value="Galactose-binding domain-like"/>
    <property type="match status" value="2"/>
</dbReference>
<dbReference type="Gene3D" id="2.10.25.10">
    <property type="entry name" value="Laminin"/>
    <property type="match status" value="2"/>
</dbReference>
<dbReference type="InterPro" id="IPR000742">
    <property type="entry name" value="EGF-like_dom"/>
</dbReference>
<dbReference type="InterPro" id="IPR000421">
    <property type="entry name" value="FA58C"/>
</dbReference>
<dbReference type="InterPro" id="IPR008979">
    <property type="entry name" value="Galactose-bd-like_sf"/>
</dbReference>
<dbReference type="InterPro" id="IPR050633">
    <property type="entry name" value="Neuropilin_MCO_CoagFactor"/>
</dbReference>
<dbReference type="PANTHER" id="PTHR46806">
    <property type="entry name" value="F5/8 TYPE C DOMAIN-CONTAINING PROTEIN"/>
    <property type="match status" value="1"/>
</dbReference>
<dbReference type="PANTHER" id="PTHR46806:SF5">
    <property type="entry name" value="F5_8 TYPE C DOMAIN-CONTAINING PROTEIN"/>
    <property type="match status" value="1"/>
</dbReference>
<dbReference type="Pfam" id="PF00008">
    <property type="entry name" value="EGF"/>
    <property type="match status" value="2"/>
</dbReference>
<dbReference type="Pfam" id="PF00754">
    <property type="entry name" value="F5_F8_type_C"/>
    <property type="match status" value="2"/>
</dbReference>
<dbReference type="SMART" id="SM00181">
    <property type="entry name" value="EGF"/>
    <property type="match status" value="2"/>
</dbReference>
<dbReference type="SMART" id="SM00231">
    <property type="entry name" value="FA58C"/>
    <property type="match status" value="2"/>
</dbReference>
<dbReference type="SUPFAM" id="SSF57196">
    <property type="entry name" value="EGF/Laminin"/>
    <property type="match status" value="2"/>
</dbReference>
<dbReference type="SUPFAM" id="SSF49785">
    <property type="entry name" value="Galactose-binding domain-like"/>
    <property type="match status" value="2"/>
</dbReference>
<dbReference type="PROSITE" id="PS00022">
    <property type="entry name" value="EGF_1"/>
    <property type="match status" value="2"/>
</dbReference>
<dbReference type="PROSITE" id="PS01186">
    <property type="entry name" value="EGF_2"/>
    <property type="match status" value="2"/>
</dbReference>
<dbReference type="PROSITE" id="PS50026">
    <property type="entry name" value="EGF_3"/>
    <property type="match status" value="2"/>
</dbReference>
<dbReference type="PROSITE" id="PS01285">
    <property type="entry name" value="FA58C_1"/>
    <property type="match status" value="2"/>
</dbReference>
<dbReference type="PROSITE" id="PS01286">
    <property type="entry name" value="FA58C_2"/>
    <property type="match status" value="2"/>
</dbReference>
<dbReference type="PROSITE" id="PS50022">
    <property type="entry name" value="FA58C_3"/>
    <property type="match status" value="2"/>
</dbReference>
<keyword id="KW-0037">Angiogenesis</keyword>
<keyword id="KW-0130">Cell adhesion</keyword>
<keyword id="KW-0968">Cytoplasmic vesicle</keyword>
<keyword id="KW-0903">Direct protein sequencing</keyword>
<keyword id="KW-1015">Disulfide bond</keyword>
<keyword id="KW-0245">EGF-like domain</keyword>
<keyword id="KW-0278">Fertilization</keyword>
<keyword id="KW-0325">Glycoprotein</keyword>
<keyword id="KW-0472">Membrane</keyword>
<keyword id="KW-1185">Reference proteome</keyword>
<keyword id="KW-0677">Repeat</keyword>
<keyword id="KW-0964">Secreted</keyword>
<name>MFGM_PIG</name>